<organism>
    <name type="scientific">Brachyspira hyodysenteriae (strain ATCC 49526 / WA1)</name>
    <dbReference type="NCBI Taxonomy" id="565034"/>
    <lineage>
        <taxon>Bacteria</taxon>
        <taxon>Pseudomonadati</taxon>
        <taxon>Spirochaetota</taxon>
        <taxon>Spirochaetia</taxon>
        <taxon>Brachyspirales</taxon>
        <taxon>Brachyspiraceae</taxon>
        <taxon>Brachyspira</taxon>
    </lineage>
</organism>
<evidence type="ECO:0000255" key="1">
    <source>
        <dbReference type="HAMAP-Rule" id="MF_00514"/>
    </source>
</evidence>
<evidence type="ECO:0000305" key="2"/>
<feature type="chain" id="PRO_1000211693" description="Large ribosomal subunit protein bL35">
    <location>
        <begin position="1"/>
        <end position="67"/>
    </location>
</feature>
<reference key="1">
    <citation type="journal article" date="2009" name="PLoS ONE">
        <title>Genome sequence of the pathogenic intestinal spirochete Brachyspira hyodysenteriae reveals adaptations to its lifestyle in the porcine large intestine.</title>
        <authorList>
            <person name="Bellgard M.I."/>
            <person name="Wanchanthuek P."/>
            <person name="La T."/>
            <person name="Ryan K."/>
            <person name="Moolhuijzen P."/>
            <person name="Albertyn Z."/>
            <person name="Shaban B."/>
            <person name="Motro Y."/>
            <person name="Dunn D.S."/>
            <person name="Schibeci D."/>
            <person name="Hunter A."/>
            <person name="Barrero R."/>
            <person name="Phillips N.D."/>
            <person name="Hampson D.J."/>
        </authorList>
    </citation>
    <scope>NUCLEOTIDE SEQUENCE [LARGE SCALE GENOMIC DNA]</scope>
    <source>
        <strain>ATCC 49526 / WA1</strain>
    </source>
</reference>
<name>RL35_BRAHW</name>
<protein>
    <recommendedName>
        <fullName evidence="1">Large ribosomal subunit protein bL35</fullName>
    </recommendedName>
    <alternativeName>
        <fullName evidence="2">50S ribosomal protein L35</fullName>
    </alternativeName>
</protein>
<accession>C0QZD1</accession>
<gene>
    <name evidence="1" type="primary">rpmI</name>
    <name type="ordered locus">BHWA1_00725</name>
</gene>
<proteinExistence type="inferred from homology"/>
<comment type="similarity">
    <text evidence="1">Belongs to the bacterial ribosomal protein bL35 family.</text>
</comment>
<sequence>MKQKLKTKSGAKKRFRFSKTGKVKFAHAFGSHKFLSKRPDTKRKYRKARIADDTNMLEMPRLMPYGR</sequence>
<keyword id="KW-0687">Ribonucleoprotein</keyword>
<keyword id="KW-0689">Ribosomal protein</keyword>
<dbReference type="EMBL" id="CP001357">
    <property type="protein sequence ID" value="ACN83219.1"/>
    <property type="molecule type" value="Genomic_DNA"/>
</dbReference>
<dbReference type="RefSeq" id="WP_008725923.1">
    <property type="nucleotide sequence ID" value="NC_012225.1"/>
</dbReference>
<dbReference type="SMR" id="C0QZD1"/>
<dbReference type="STRING" id="565034.BHWA1_00725"/>
<dbReference type="GeneID" id="66488888"/>
<dbReference type="KEGG" id="bhy:BHWA1_00725"/>
<dbReference type="eggNOG" id="COG0291">
    <property type="taxonomic scope" value="Bacteria"/>
</dbReference>
<dbReference type="HOGENOM" id="CLU_169643_2_2_12"/>
<dbReference type="Proteomes" id="UP000001803">
    <property type="component" value="Chromosome"/>
</dbReference>
<dbReference type="GO" id="GO:1990904">
    <property type="term" value="C:ribonucleoprotein complex"/>
    <property type="evidence" value="ECO:0007669"/>
    <property type="project" value="UniProtKB-KW"/>
</dbReference>
<dbReference type="GO" id="GO:0005840">
    <property type="term" value="C:ribosome"/>
    <property type="evidence" value="ECO:0007669"/>
    <property type="project" value="UniProtKB-KW"/>
</dbReference>
<dbReference type="GO" id="GO:0003735">
    <property type="term" value="F:structural constituent of ribosome"/>
    <property type="evidence" value="ECO:0007669"/>
    <property type="project" value="InterPro"/>
</dbReference>
<dbReference type="GO" id="GO:0006412">
    <property type="term" value="P:translation"/>
    <property type="evidence" value="ECO:0007669"/>
    <property type="project" value="UniProtKB-UniRule"/>
</dbReference>
<dbReference type="Gene3D" id="4.10.410.60">
    <property type="match status" value="1"/>
</dbReference>
<dbReference type="HAMAP" id="MF_00514">
    <property type="entry name" value="Ribosomal_bL35"/>
    <property type="match status" value="1"/>
</dbReference>
<dbReference type="InterPro" id="IPR001706">
    <property type="entry name" value="Ribosomal_bL35"/>
</dbReference>
<dbReference type="InterPro" id="IPR021137">
    <property type="entry name" value="Ribosomal_bL35-like"/>
</dbReference>
<dbReference type="InterPro" id="IPR018265">
    <property type="entry name" value="Ribosomal_bL35_CS"/>
</dbReference>
<dbReference type="InterPro" id="IPR037229">
    <property type="entry name" value="Ribosomal_bL35_sf"/>
</dbReference>
<dbReference type="NCBIfam" id="TIGR00001">
    <property type="entry name" value="rpmI_bact"/>
    <property type="match status" value="1"/>
</dbReference>
<dbReference type="Pfam" id="PF01632">
    <property type="entry name" value="Ribosomal_L35p"/>
    <property type="match status" value="1"/>
</dbReference>
<dbReference type="PRINTS" id="PR00064">
    <property type="entry name" value="RIBOSOMALL35"/>
</dbReference>
<dbReference type="SUPFAM" id="SSF143034">
    <property type="entry name" value="L35p-like"/>
    <property type="match status" value="1"/>
</dbReference>
<dbReference type="PROSITE" id="PS00936">
    <property type="entry name" value="RIBOSOMAL_L35"/>
    <property type="match status" value="1"/>
</dbReference>